<sequence>MSDNAQLTGLCDRFRGFYPVVIDVETAGFNAKTDALLEIAAITLKMDEQGWLMPDTTLHFHVEPFVGANLQPEALAFNGIDPNDPDRGAVSEYEALHEIFKVVRKGIKASGCNRAIMVAHNANFDHSFMMAAAERASLKRNPFHPFATFDTAALAGLALGQTVLSKACQTAGMDFDSTQAHSALYDTERTAVLFCEIVNRWKRLGGWPLPAAEEV</sequence>
<feature type="chain" id="PRO_1000058189" description="Ribonuclease T">
    <location>
        <begin position="1"/>
        <end position="215"/>
    </location>
</feature>
<feature type="domain" description="Exonuclease" evidence="1">
    <location>
        <begin position="20"/>
        <end position="194"/>
    </location>
</feature>
<feature type="active site" description="Proton donor/acceptor" evidence="1">
    <location>
        <position position="181"/>
    </location>
</feature>
<feature type="binding site" evidence="1">
    <location>
        <position position="23"/>
    </location>
    <ligand>
        <name>Mg(2+)</name>
        <dbReference type="ChEBI" id="CHEBI:18420"/>
        <label>1</label>
        <note>catalytic</note>
    </ligand>
</feature>
<feature type="binding site" evidence="1">
    <location>
        <position position="23"/>
    </location>
    <ligand>
        <name>Mg(2+)</name>
        <dbReference type="ChEBI" id="CHEBI:18420"/>
        <label>2</label>
        <note>catalytic</note>
    </ligand>
</feature>
<feature type="binding site" evidence="1">
    <location>
        <position position="25"/>
    </location>
    <ligand>
        <name>Mg(2+)</name>
        <dbReference type="ChEBI" id="CHEBI:18420"/>
        <label>2</label>
        <note>catalytic</note>
    </ligand>
</feature>
<feature type="binding site" evidence="1">
    <location>
        <position position="181"/>
    </location>
    <ligand>
        <name>Mg(2+)</name>
        <dbReference type="ChEBI" id="CHEBI:18420"/>
        <label>2</label>
        <note>catalytic</note>
    </ligand>
</feature>
<feature type="binding site" evidence="1">
    <location>
        <position position="186"/>
    </location>
    <ligand>
        <name>Mg(2+)</name>
        <dbReference type="ChEBI" id="CHEBI:18420"/>
        <label>2</label>
        <note>catalytic</note>
    </ligand>
</feature>
<feature type="site" description="Important for substrate binding and specificity" evidence="1">
    <location>
        <position position="29"/>
    </location>
</feature>
<feature type="site" description="Important for substrate binding and specificity" evidence="1">
    <location>
        <position position="77"/>
    </location>
</feature>
<feature type="site" description="Important for substrate binding and specificity" evidence="1">
    <location>
        <position position="124"/>
    </location>
</feature>
<feature type="site" description="Important for substrate binding and specificity" evidence="1">
    <location>
        <position position="146"/>
    </location>
</feature>
<organism>
    <name type="scientific">Escherichia coli O9:H4 (strain HS)</name>
    <dbReference type="NCBI Taxonomy" id="331112"/>
    <lineage>
        <taxon>Bacteria</taxon>
        <taxon>Pseudomonadati</taxon>
        <taxon>Pseudomonadota</taxon>
        <taxon>Gammaproteobacteria</taxon>
        <taxon>Enterobacterales</taxon>
        <taxon>Enterobacteriaceae</taxon>
        <taxon>Escherichia</taxon>
    </lineage>
</organism>
<comment type="function">
    <text evidence="1">Trims short 3' overhangs of a variety of RNA species, leaving a one or two nucleotide 3' overhang. Responsible for the end-turnover of tRNA: specifically removes the terminal AMP residue from uncharged tRNA (tRNA-C-C-A). Also appears to be involved in tRNA biosynthesis.</text>
</comment>
<comment type="cofactor">
    <cofactor evidence="1">
        <name>Mg(2+)</name>
        <dbReference type="ChEBI" id="CHEBI:18420"/>
    </cofactor>
    <text evidence="1">Binds two Mg(2+) per subunit. The active form of the enzyme binds two Mg(2+) ions in its active site. The first Mg(2+) forms only one salt bridge with the protein.</text>
</comment>
<comment type="subunit">
    <text evidence="1">Homodimer.</text>
</comment>
<comment type="similarity">
    <text evidence="1">Belongs to the RNase T family.</text>
</comment>
<proteinExistence type="inferred from homology"/>
<protein>
    <recommendedName>
        <fullName evidence="1">Ribonuclease T</fullName>
        <ecNumber evidence="1">3.1.13.-</ecNumber>
    </recommendedName>
    <alternativeName>
        <fullName evidence="1">Exoribonuclease T</fullName>
        <shortName evidence="1">RNase T</shortName>
    </alternativeName>
</protein>
<name>RNT_ECOHS</name>
<reference key="1">
    <citation type="journal article" date="2008" name="J. Bacteriol.">
        <title>The pangenome structure of Escherichia coli: comparative genomic analysis of E. coli commensal and pathogenic isolates.</title>
        <authorList>
            <person name="Rasko D.A."/>
            <person name="Rosovitz M.J."/>
            <person name="Myers G.S.A."/>
            <person name="Mongodin E.F."/>
            <person name="Fricke W.F."/>
            <person name="Gajer P."/>
            <person name="Crabtree J."/>
            <person name="Sebaihia M."/>
            <person name="Thomson N.R."/>
            <person name="Chaudhuri R."/>
            <person name="Henderson I.R."/>
            <person name="Sperandio V."/>
            <person name="Ravel J."/>
        </authorList>
    </citation>
    <scope>NUCLEOTIDE SEQUENCE [LARGE SCALE GENOMIC DNA]</scope>
    <source>
        <strain>HS</strain>
    </source>
</reference>
<evidence type="ECO:0000255" key="1">
    <source>
        <dbReference type="HAMAP-Rule" id="MF_00157"/>
    </source>
</evidence>
<keyword id="KW-0269">Exonuclease</keyword>
<keyword id="KW-0378">Hydrolase</keyword>
<keyword id="KW-0460">Magnesium</keyword>
<keyword id="KW-0479">Metal-binding</keyword>
<keyword id="KW-0540">Nuclease</keyword>
<keyword id="KW-0819">tRNA processing</keyword>
<dbReference type="EC" id="3.1.13.-" evidence="1"/>
<dbReference type="EMBL" id="CP000802">
    <property type="protein sequence ID" value="ABV06050.1"/>
    <property type="molecule type" value="Genomic_DNA"/>
</dbReference>
<dbReference type="RefSeq" id="WP_001282281.1">
    <property type="nucleotide sequence ID" value="NC_009800.1"/>
</dbReference>
<dbReference type="SMR" id="A8A0J6"/>
<dbReference type="GeneID" id="93775806"/>
<dbReference type="KEGG" id="ecx:EcHS_A1729"/>
<dbReference type="HOGENOM" id="CLU_082724_0_0_6"/>
<dbReference type="GO" id="GO:0005829">
    <property type="term" value="C:cytosol"/>
    <property type="evidence" value="ECO:0007669"/>
    <property type="project" value="TreeGrafter"/>
</dbReference>
<dbReference type="GO" id="GO:0008408">
    <property type="term" value="F:3'-5' exonuclease activity"/>
    <property type="evidence" value="ECO:0007669"/>
    <property type="project" value="TreeGrafter"/>
</dbReference>
<dbReference type="GO" id="GO:0000287">
    <property type="term" value="F:magnesium ion binding"/>
    <property type="evidence" value="ECO:0007669"/>
    <property type="project" value="UniProtKB-UniRule"/>
</dbReference>
<dbReference type="GO" id="GO:0003676">
    <property type="term" value="F:nucleic acid binding"/>
    <property type="evidence" value="ECO:0007669"/>
    <property type="project" value="InterPro"/>
</dbReference>
<dbReference type="GO" id="GO:0016896">
    <property type="term" value="F:RNA exonuclease activity, producing 5'-phosphomonoesters"/>
    <property type="evidence" value="ECO:0007669"/>
    <property type="project" value="UniProtKB-UniRule"/>
</dbReference>
<dbReference type="GO" id="GO:0045004">
    <property type="term" value="P:DNA replication proofreading"/>
    <property type="evidence" value="ECO:0007669"/>
    <property type="project" value="TreeGrafter"/>
</dbReference>
<dbReference type="GO" id="GO:0008033">
    <property type="term" value="P:tRNA processing"/>
    <property type="evidence" value="ECO:0007669"/>
    <property type="project" value="UniProtKB-KW"/>
</dbReference>
<dbReference type="CDD" id="cd06134">
    <property type="entry name" value="RNaseT"/>
    <property type="match status" value="1"/>
</dbReference>
<dbReference type="FunFam" id="3.30.420.10:FF:000009">
    <property type="entry name" value="Ribonuclease T"/>
    <property type="match status" value="1"/>
</dbReference>
<dbReference type="Gene3D" id="3.30.420.10">
    <property type="entry name" value="Ribonuclease H-like superfamily/Ribonuclease H"/>
    <property type="match status" value="1"/>
</dbReference>
<dbReference type="HAMAP" id="MF_00157">
    <property type="entry name" value="RNase_T"/>
    <property type="match status" value="1"/>
</dbReference>
<dbReference type="InterPro" id="IPR013520">
    <property type="entry name" value="Exonuclease_RNaseT/DNA_pol3"/>
</dbReference>
<dbReference type="InterPro" id="IPR005987">
    <property type="entry name" value="RNase_T"/>
</dbReference>
<dbReference type="InterPro" id="IPR012337">
    <property type="entry name" value="RNaseH-like_sf"/>
</dbReference>
<dbReference type="InterPro" id="IPR036397">
    <property type="entry name" value="RNaseH_sf"/>
</dbReference>
<dbReference type="NCBIfam" id="TIGR01298">
    <property type="entry name" value="RNaseT"/>
    <property type="match status" value="1"/>
</dbReference>
<dbReference type="PANTHER" id="PTHR30231">
    <property type="entry name" value="DNA POLYMERASE III SUBUNIT EPSILON"/>
    <property type="match status" value="1"/>
</dbReference>
<dbReference type="PANTHER" id="PTHR30231:SF2">
    <property type="entry name" value="RIBONUCLEASE T"/>
    <property type="match status" value="1"/>
</dbReference>
<dbReference type="Pfam" id="PF00929">
    <property type="entry name" value="RNase_T"/>
    <property type="match status" value="1"/>
</dbReference>
<dbReference type="SMART" id="SM00479">
    <property type="entry name" value="EXOIII"/>
    <property type="match status" value="1"/>
</dbReference>
<dbReference type="SUPFAM" id="SSF53098">
    <property type="entry name" value="Ribonuclease H-like"/>
    <property type="match status" value="1"/>
</dbReference>
<accession>A8A0J6</accession>
<gene>
    <name evidence="1" type="primary">rnt</name>
    <name type="ordered locus">EcHS_A1729</name>
</gene>